<accession>A3MRU5</accession>
<feature type="chain" id="PRO_1000051962" description="DNA-directed RNA polymerase subunit beta">
    <location>
        <begin position="1"/>
        <end position="1368"/>
    </location>
</feature>
<reference key="1">
    <citation type="journal article" date="2010" name="Genome Biol. Evol.">
        <title>Continuing evolution of Burkholderia mallei through genome reduction and large-scale rearrangements.</title>
        <authorList>
            <person name="Losada L."/>
            <person name="Ronning C.M."/>
            <person name="DeShazer D."/>
            <person name="Woods D."/>
            <person name="Fedorova N."/>
            <person name="Kim H.S."/>
            <person name="Shabalina S.A."/>
            <person name="Pearson T.R."/>
            <person name="Brinkac L."/>
            <person name="Tan P."/>
            <person name="Nandi T."/>
            <person name="Crabtree J."/>
            <person name="Badger J."/>
            <person name="Beckstrom-Sternberg S."/>
            <person name="Saqib M."/>
            <person name="Schutzer S.E."/>
            <person name="Keim P."/>
            <person name="Nierman W.C."/>
        </authorList>
    </citation>
    <scope>NUCLEOTIDE SEQUENCE [LARGE SCALE GENOMIC DNA]</scope>
    <source>
        <strain>NCTC 10247</strain>
    </source>
</reference>
<name>RPOB_BURM7</name>
<gene>
    <name evidence="1" type="primary">rpoB</name>
    <name type="ordered locus">BMA10247_3469</name>
</gene>
<protein>
    <recommendedName>
        <fullName evidence="1">DNA-directed RNA polymerase subunit beta</fullName>
        <shortName evidence="1">RNAP subunit beta</shortName>
        <ecNumber evidence="1">2.7.7.6</ecNumber>
    </recommendedName>
    <alternativeName>
        <fullName evidence="1">RNA polymerase subunit beta</fullName>
    </alternativeName>
    <alternativeName>
        <fullName evidence="1">Transcriptase subunit beta</fullName>
    </alternativeName>
</protein>
<evidence type="ECO:0000255" key="1">
    <source>
        <dbReference type="HAMAP-Rule" id="MF_01321"/>
    </source>
</evidence>
<dbReference type="EC" id="2.7.7.6" evidence="1"/>
<dbReference type="EMBL" id="CP000548">
    <property type="protein sequence ID" value="ABO05711.1"/>
    <property type="molecule type" value="Genomic_DNA"/>
</dbReference>
<dbReference type="RefSeq" id="WP_004198365.1">
    <property type="nucleotide sequence ID" value="NZ_CP007802.1"/>
</dbReference>
<dbReference type="SMR" id="A3MRU5"/>
<dbReference type="GeneID" id="92980328"/>
<dbReference type="KEGG" id="bmaz:BM44_3050"/>
<dbReference type="KEGG" id="bmn:BMA10247_3469"/>
<dbReference type="PATRIC" id="fig|320389.8.peg.3422"/>
<dbReference type="GO" id="GO:0000428">
    <property type="term" value="C:DNA-directed RNA polymerase complex"/>
    <property type="evidence" value="ECO:0007669"/>
    <property type="project" value="UniProtKB-KW"/>
</dbReference>
<dbReference type="GO" id="GO:0003677">
    <property type="term" value="F:DNA binding"/>
    <property type="evidence" value="ECO:0007669"/>
    <property type="project" value="UniProtKB-UniRule"/>
</dbReference>
<dbReference type="GO" id="GO:0003899">
    <property type="term" value="F:DNA-directed RNA polymerase activity"/>
    <property type="evidence" value="ECO:0007669"/>
    <property type="project" value="UniProtKB-UniRule"/>
</dbReference>
<dbReference type="GO" id="GO:0032549">
    <property type="term" value="F:ribonucleoside binding"/>
    <property type="evidence" value="ECO:0007669"/>
    <property type="project" value="InterPro"/>
</dbReference>
<dbReference type="GO" id="GO:0006351">
    <property type="term" value="P:DNA-templated transcription"/>
    <property type="evidence" value="ECO:0007669"/>
    <property type="project" value="UniProtKB-UniRule"/>
</dbReference>
<dbReference type="CDD" id="cd00653">
    <property type="entry name" value="RNA_pol_B_RPB2"/>
    <property type="match status" value="1"/>
</dbReference>
<dbReference type="FunFam" id="2.40.50.100:FF:000006">
    <property type="entry name" value="DNA-directed RNA polymerase subunit beta"/>
    <property type="match status" value="1"/>
</dbReference>
<dbReference type="FunFam" id="2.40.50.150:FF:000001">
    <property type="entry name" value="DNA-directed RNA polymerase subunit beta"/>
    <property type="match status" value="1"/>
</dbReference>
<dbReference type="FunFam" id="3.90.1110.10:FF:000004">
    <property type="entry name" value="DNA-directed RNA polymerase subunit beta"/>
    <property type="match status" value="1"/>
</dbReference>
<dbReference type="FunFam" id="3.90.1800.10:FF:000001">
    <property type="entry name" value="DNA-directed RNA polymerase subunit beta"/>
    <property type="match status" value="1"/>
</dbReference>
<dbReference type="Gene3D" id="2.40.50.100">
    <property type="match status" value="1"/>
</dbReference>
<dbReference type="Gene3D" id="2.40.50.150">
    <property type="match status" value="1"/>
</dbReference>
<dbReference type="Gene3D" id="3.90.1100.10">
    <property type="match status" value="2"/>
</dbReference>
<dbReference type="Gene3D" id="2.30.150.10">
    <property type="entry name" value="DNA-directed RNA polymerase, beta subunit, external 1 domain"/>
    <property type="match status" value="1"/>
</dbReference>
<dbReference type="Gene3D" id="2.40.270.10">
    <property type="entry name" value="DNA-directed RNA polymerase, subunit 2, domain 6"/>
    <property type="match status" value="2"/>
</dbReference>
<dbReference type="Gene3D" id="3.90.1800.10">
    <property type="entry name" value="RNA polymerase alpha subunit dimerisation domain"/>
    <property type="match status" value="1"/>
</dbReference>
<dbReference type="Gene3D" id="3.90.1110.10">
    <property type="entry name" value="RNA polymerase Rpb2, domain 2"/>
    <property type="match status" value="2"/>
</dbReference>
<dbReference type="HAMAP" id="MF_01321">
    <property type="entry name" value="RNApol_bact_RpoB"/>
    <property type="match status" value="1"/>
</dbReference>
<dbReference type="InterPro" id="IPR042107">
    <property type="entry name" value="DNA-dir_RNA_pol_bsu_ext_1_sf"/>
</dbReference>
<dbReference type="InterPro" id="IPR019462">
    <property type="entry name" value="DNA-dir_RNA_pol_bsu_external_1"/>
</dbReference>
<dbReference type="InterPro" id="IPR015712">
    <property type="entry name" value="DNA-dir_RNA_pol_su2"/>
</dbReference>
<dbReference type="InterPro" id="IPR007120">
    <property type="entry name" value="DNA-dir_RNAP_su2_dom"/>
</dbReference>
<dbReference type="InterPro" id="IPR037033">
    <property type="entry name" value="DNA-dir_RNAP_su2_hyb_sf"/>
</dbReference>
<dbReference type="InterPro" id="IPR010243">
    <property type="entry name" value="RNA_pol_bsu_bac"/>
</dbReference>
<dbReference type="InterPro" id="IPR007121">
    <property type="entry name" value="RNA_pol_bsu_CS"/>
</dbReference>
<dbReference type="InterPro" id="IPR007644">
    <property type="entry name" value="RNA_pol_bsu_protrusion"/>
</dbReference>
<dbReference type="InterPro" id="IPR007642">
    <property type="entry name" value="RNA_pol_Rpb2_2"/>
</dbReference>
<dbReference type="InterPro" id="IPR037034">
    <property type="entry name" value="RNA_pol_Rpb2_2_sf"/>
</dbReference>
<dbReference type="InterPro" id="IPR007645">
    <property type="entry name" value="RNA_pol_Rpb2_3"/>
</dbReference>
<dbReference type="InterPro" id="IPR007641">
    <property type="entry name" value="RNA_pol_Rpb2_7"/>
</dbReference>
<dbReference type="InterPro" id="IPR014724">
    <property type="entry name" value="RNA_pol_RPB2_OB-fold"/>
</dbReference>
<dbReference type="NCBIfam" id="NF001616">
    <property type="entry name" value="PRK00405.1"/>
    <property type="match status" value="1"/>
</dbReference>
<dbReference type="NCBIfam" id="TIGR02013">
    <property type="entry name" value="rpoB"/>
    <property type="match status" value="1"/>
</dbReference>
<dbReference type="PANTHER" id="PTHR20856">
    <property type="entry name" value="DNA-DIRECTED RNA POLYMERASE I SUBUNIT 2"/>
    <property type="match status" value="1"/>
</dbReference>
<dbReference type="Pfam" id="PF04563">
    <property type="entry name" value="RNA_pol_Rpb2_1"/>
    <property type="match status" value="1"/>
</dbReference>
<dbReference type="Pfam" id="PF04561">
    <property type="entry name" value="RNA_pol_Rpb2_2"/>
    <property type="match status" value="2"/>
</dbReference>
<dbReference type="Pfam" id="PF04565">
    <property type="entry name" value="RNA_pol_Rpb2_3"/>
    <property type="match status" value="1"/>
</dbReference>
<dbReference type="Pfam" id="PF10385">
    <property type="entry name" value="RNA_pol_Rpb2_45"/>
    <property type="match status" value="1"/>
</dbReference>
<dbReference type="Pfam" id="PF00562">
    <property type="entry name" value="RNA_pol_Rpb2_6"/>
    <property type="match status" value="1"/>
</dbReference>
<dbReference type="Pfam" id="PF04560">
    <property type="entry name" value="RNA_pol_Rpb2_7"/>
    <property type="match status" value="1"/>
</dbReference>
<dbReference type="SUPFAM" id="SSF64484">
    <property type="entry name" value="beta and beta-prime subunits of DNA dependent RNA-polymerase"/>
    <property type="match status" value="1"/>
</dbReference>
<dbReference type="PROSITE" id="PS01166">
    <property type="entry name" value="RNA_POL_BETA"/>
    <property type="match status" value="1"/>
</dbReference>
<sequence length="1368" mass="153151">MQYSFTEKKRIRKSFAKRSIVHQVPFLLATQLESFSTFLQADVPTAQRKSEGLQAAFTSVFPIVSHNGFARLEFVSYALSSPAFNIKECQQRGLTYCSALRAKVRLVLLDKESPSKPVVKEVKEQEVYMGEIPLMTPTGSFVINGTERVIVSQLHRSPGVFFEHDKGKTHSSGKLLFSARIIPYRGSWLDFEFDPKDVLYFRVDRRRKMPVTILLKAIGLTPEQILANFFVFDNFTLMDEGAQMEFVPERLRGEVARFDITDREGKVIVQKDKRINAKHIRDLEAAKTKYISVPEDYLLGRVLAKNVVDGDTGEVIANANDEITEGVLEKLREAKIKEIQTLYTNDLDQGPYISSTLRVDETVDKTAARIAIYRMMRPGEPPTEEAVEALFNRLFYSEDAYDLSKVGRMKFNRRVGRDEITGPMTLQDDDILATIKILVELRNGKGEVDDIDHLGNRRVRCVGELAENQFRAGLVRVERAVKERLGQAESENLMPHDLINSKPISSAIREFFGSSQLSQFMDQTNPLSEITHKRRVSALGPGGLTRERAGFEVRDVHPTHYGRVCPIETPEGPNIGLINSLALYAHLNEYGFLETPYRKVVDSKVTDQIDYLSAIEEGRYMIAQANAAIGDDGALVDELVSSREAGETMMVTPDRIQYMDVAPSQIVSVAASLIPFLEHDDANRALMGSNMQRQAVPCLRPEKPVVGTGIERTVAVDSGTTVQALRGGVVDYVDAGRIVIRVNDDEAVAGEVGVDIYNLIKYTRSNQNTNINQRPIVKMGDKVSRGDVLADGASTDLGELALGQNMLIAFMPWNGYNFEDSILISERVVADDRYTSIHIEELNVVARDTKLGPEEITRDISNLAEVQLGRLDESGIVYIGAEVEAGDVLVGKVTPKGETQLTPEEKLLRAIFGEKASDVKDTSLRVPSGMSGTVIDVQVFTREGIQRDKRAQQIIDDELKRYRLDLNDQLRIVEGDAFQRLARMLVGKVANGGPKKLAKGTKIDQAYLEDLDHYHWFDIRLADDEAAVQLEAIKNSIEEKRHQFDLAFEEKRKKLTQGDELPPGVLKMVKVYLAVKRRLQPGDKMAGRHGNKGVVSKIVPVEDMPYMADGRPADVVLNPLGVPSRMNVGQVLEVHLGWAAKGLGWRIGEMLARQTKIEELRVFLTKIYNESGRAEDLESFSDDEILELAKNLREGVPFATPVFDGATEEEMSKMLDLAFPDDIAEQLDMNPSKNQVRLYDGRTGEPFERRVTVGYMHYLKLHHLVDDKMHARSTGPYSLVTQQPLGGKAQFGGQRFGEMEVWALEAYGASYVLQEMLTVKSDDVTGRTKVYENLVKGDHVIDAGMPESFNVLVKEIRSLGIDIDLDRN</sequence>
<organism>
    <name type="scientific">Burkholderia mallei (strain NCTC 10247)</name>
    <dbReference type="NCBI Taxonomy" id="320389"/>
    <lineage>
        <taxon>Bacteria</taxon>
        <taxon>Pseudomonadati</taxon>
        <taxon>Pseudomonadota</taxon>
        <taxon>Betaproteobacteria</taxon>
        <taxon>Burkholderiales</taxon>
        <taxon>Burkholderiaceae</taxon>
        <taxon>Burkholderia</taxon>
        <taxon>pseudomallei group</taxon>
    </lineage>
</organism>
<comment type="function">
    <text evidence="1">DNA-dependent RNA polymerase catalyzes the transcription of DNA into RNA using the four ribonucleoside triphosphates as substrates.</text>
</comment>
<comment type="catalytic activity">
    <reaction evidence="1">
        <text>RNA(n) + a ribonucleoside 5'-triphosphate = RNA(n+1) + diphosphate</text>
        <dbReference type="Rhea" id="RHEA:21248"/>
        <dbReference type="Rhea" id="RHEA-COMP:14527"/>
        <dbReference type="Rhea" id="RHEA-COMP:17342"/>
        <dbReference type="ChEBI" id="CHEBI:33019"/>
        <dbReference type="ChEBI" id="CHEBI:61557"/>
        <dbReference type="ChEBI" id="CHEBI:140395"/>
        <dbReference type="EC" id="2.7.7.6"/>
    </reaction>
</comment>
<comment type="subunit">
    <text evidence="1">The RNAP catalytic core consists of 2 alpha, 1 beta, 1 beta' and 1 omega subunit. When a sigma factor is associated with the core the holoenzyme is formed, which can initiate transcription.</text>
</comment>
<comment type="similarity">
    <text evidence="1">Belongs to the RNA polymerase beta chain family.</text>
</comment>
<proteinExistence type="inferred from homology"/>
<keyword id="KW-0240">DNA-directed RNA polymerase</keyword>
<keyword id="KW-0548">Nucleotidyltransferase</keyword>
<keyword id="KW-0804">Transcription</keyword>
<keyword id="KW-0808">Transferase</keyword>